<dbReference type="EC" id="1.6.1.1" evidence="1"/>
<dbReference type="EMBL" id="CP000438">
    <property type="protein sequence ID" value="ABJ12230.1"/>
    <property type="molecule type" value="Genomic_DNA"/>
</dbReference>
<dbReference type="RefSeq" id="WP_003091177.1">
    <property type="nucleotide sequence ID" value="NZ_CP034244.1"/>
</dbReference>
<dbReference type="SMR" id="Q02PF5"/>
<dbReference type="KEGG" id="pau:PA14_25390"/>
<dbReference type="PseudoCAP" id="PA14_25390"/>
<dbReference type="HOGENOM" id="CLU_016755_0_0_6"/>
<dbReference type="BioCyc" id="PAER208963:G1G74-2116-MONOMER"/>
<dbReference type="Proteomes" id="UP000000653">
    <property type="component" value="Chromosome"/>
</dbReference>
<dbReference type="GO" id="GO:0005829">
    <property type="term" value="C:cytosol"/>
    <property type="evidence" value="ECO:0007669"/>
    <property type="project" value="TreeGrafter"/>
</dbReference>
<dbReference type="GO" id="GO:0004148">
    <property type="term" value="F:dihydrolipoyl dehydrogenase (NADH) activity"/>
    <property type="evidence" value="ECO:0007669"/>
    <property type="project" value="TreeGrafter"/>
</dbReference>
<dbReference type="GO" id="GO:0050660">
    <property type="term" value="F:flavin adenine dinucleotide binding"/>
    <property type="evidence" value="ECO:0007669"/>
    <property type="project" value="TreeGrafter"/>
</dbReference>
<dbReference type="GO" id="GO:0003957">
    <property type="term" value="F:NAD(P)+ transhydrogenase (Si-specific) activity"/>
    <property type="evidence" value="ECO:0007669"/>
    <property type="project" value="UniProtKB-UniRule"/>
</dbReference>
<dbReference type="GO" id="GO:0006103">
    <property type="term" value="P:2-oxoglutarate metabolic process"/>
    <property type="evidence" value="ECO:0007669"/>
    <property type="project" value="TreeGrafter"/>
</dbReference>
<dbReference type="GO" id="GO:0006739">
    <property type="term" value="P:NADP metabolic process"/>
    <property type="evidence" value="ECO:0007669"/>
    <property type="project" value="UniProtKB-UniRule"/>
</dbReference>
<dbReference type="FunFam" id="3.30.390.30:FF:000002">
    <property type="entry name" value="Soluble pyridine nucleotide transhydrogenase"/>
    <property type="match status" value="1"/>
</dbReference>
<dbReference type="FunFam" id="3.50.50.60:FF:000008">
    <property type="entry name" value="Soluble pyridine nucleotide transhydrogenase"/>
    <property type="match status" value="1"/>
</dbReference>
<dbReference type="Gene3D" id="3.30.390.30">
    <property type="match status" value="1"/>
</dbReference>
<dbReference type="Gene3D" id="3.50.50.60">
    <property type="entry name" value="FAD/NAD(P)-binding domain"/>
    <property type="match status" value="2"/>
</dbReference>
<dbReference type="HAMAP" id="MF_00247">
    <property type="entry name" value="SthA"/>
    <property type="match status" value="1"/>
</dbReference>
<dbReference type="InterPro" id="IPR050151">
    <property type="entry name" value="Class-I_Pyr_Nuc-Dis_Oxidored"/>
</dbReference>
<dbReference type="InterPro" id="IPR036188">
    <property type="entry name" value="FAD/NAD-bd_sf"/>
</dbReference>
<dbReference type="InterPro" id="IPR023753">
    <property type="entry name" value="FAD/NAD-binding_dom"/>
</dbReference>
<dbReference type="InterPro" id="IPR016156">
    <property type="entry name" value="FAD/NAD-linked_Rdtase_dimer_sf"/>
</dbReference>
<dbReference type="InterPro" id="IPR001100">
    <property type="entry name" value="Pyr_nuc-diS_OxRdtase"/>
</dbReference>
<dbReference type="InterPro" id="IPR004099">
    <property type="entry name" value="Pyr_nucl-diS_OxRdtase_dimer"/>
</dbReference>
<dbReference type="InterPro" id="IPR022962">
    <property type="entry name" value="STH_gammaproteobact"/>
</dbReference>
<dbReference type="NCBIfam" id="NF003585">
    <property type="entry name" value="PRK05249.1"/>
    <property type="match status" value="1"/>
</dbReference>
<dbReference type="PANTHER" id="PTHR22912">
    <property type="entry name" value="DISULFIDE OXIDOREDUCTASE"/>
    <property type="match status" value="1"/>
</dbReference>
<dbReference type="PANTHER" id="PTHR22912:SF93">
    <property type="entry name" value="SOLUBLE PYRIDINE NUCLEOTIDE TRANSHYDROGENASE"/>
    <property type="match status" value="1"/>
</dbReference>
<dbReference type="Pfam" id="PF07992">
    <property type="entry name" value="Pyr_redox_2"/>
    <property type="match status" value="1"/>
</dbReference>
<dbReference type="Pfam" id="PF02852">
    <property type="entry name" value="Pyr_redox_dim"/>
    <property type="match status" value="1"/>
</dbReference>
<dbReference type="PIRSF" id="PIRSF000350">
    <property type="entry name" value="Mercury_reductase_MerA"/>
    <property type="match status" value="1"/>
</dbReference>
<dbReference type="PRINTS" id="PR00368">
    <property type="entry name" value="FADPNR"/>
</dbReference>
<dbReference type="PRINTS" id="PR00411">
    <property type="entry name" value="PNDRDTASEI"/>
</dbReference>
<dbReference type="SUPFAM" id="SSF51905">
    <property type="entry name" value="FAD/NAD(P)-binding domain"/>
    <property type="match status" value="1"/>
</dbReference>
<dbReference type="SUPFAM" id="SSF55424">
    <property type="entry name" value="FAD/NAD-linked reductases, dimerisation (C-terminal) domain"/>
    <property type="match status" value="1"/>
</dbReference>
<sequence length="464" mass="51161">MAVYNYDVVILGTGPAGEGAAMNASKYGRKLAVVDSRRVVGGNCTHLGTIPSKALRHSVKQIIEFNTNPMFRQIGEPRWFSFPDVLKSADRVISKQVASRTGYYARNRIDMFTGTASFVDERTVEVVTPSGAVERLVADQFVIATGSRPYRPSDINFNHPRVYDSDTILSLSHTPRRLIIYGAGVIGCEYASIFSGLGVLVDLIDTRDQLLSFLDDEISDALSYHLRNNNVLIRHNEEYERVEGLDNGVILHLKSGKKIKADALLWCNGRTGNTDKLGLENVGIKVNSRGQIEVDENYRTSVSNIFAAGDVIGWPSLASAAYDQGRSAAGNIVESDSWRFVNDVPTGIYTIPEISSIGKNESELTAAKIPYEVGKAFFKGMARAQISNEPVGMLKILFHRETLEILGVHCFGDQASEIVHIGQAIMNQPGELNTLKYFVNTTFNYPTMAEAYRVAAFDGLNRLF</sequence>
<keyword id="KW-0963">Cytoplasm</keyword>
<keyword id="KW-0274">FAD</keyword>
<keyword id="KW-0285">Flavoprotein</keyword>
<keyword id="KW-0520">NAD</keyword>
<keyword id="KW-0521">NADP</keyword>
<keyword id="KW-0560">Oxidoreductase</keyword>
<protein>
    <recommendedName>
        <fullName evidence="1">Soluble pyridine nucleotide transhydrogenase</fullName>
        <shortName evidence="1">STH</shortName>
        <ecNumber evidence="1">1.6.1.1</ecNumber>
    </recommendedName>
    <alternativeName>
        <fullName evidence="1">NAD(P)(+) transhydrogenase [B-specific]</fullName>
    </alternativeName>
</protein>
<proteinExistence type="inferred from homology"/>
<reference key="1">
    <citation type="journal article" date="2006" name="Genome Biol.">
        <title>Genomic analysis reveals that Pseudomonas aeruginosa virulence is combinatorial.</title>
        <authorList>
            <person name="Lee D.G."/>
            <person name="Urbach J.M."/>
            <person name="Wu G."/>
            <person name="Liberati N.T."/>
            <person name="Feinbaum R.L."/>
            <person name="Miyata S."/>
            <person name="Diggins L.T."/>
            <person name="He J."/>
            <person name="Saucier M."/>
            <person name="Deziel E."/>
            <person name="Friedman L."/>
            <person name="Li L."/>
            <person name="Grills G."/>
            <person name="Montgomery K."/>
            <person name="Kucherlapati R."/>
            <person name="Rahme L.G."/>
            <person name="Ausubel F.M."/>
        </authorList>
    </citation>
    <scope>NUCLEOTIDE SEQUENCE [LARGE SCALE GENOMIC DNA]</scope>
    <source>
        <strain>UCBPP-PA14</strain>
    </source>
</reference>
<evidence type="ECO:0000255" key="1">
    <source>
        <dbReference type="HAMAP-Rule" id="MF_00247"/>
    </source>
</evidence>
<accession>Q02PF5</accession>
<organism>
    <name type="scientific">Pseudomonas aeruginosa (strain UCBPP-PA14)</name>
    <dbReference type="NCBI Taxonomy" id="208963"/>
    <lineage>
        <taxon>Bacteria</taxon>
        <taxon>Pseudomonadati</taxon>
        <taxon>Pseudomonadota</taxon>
        <taxon>Gammaproteobacteria</taxon>
        <taxon>Pseudomonadales</taxon>
        <taxon>Pseudomonadaceae</taxon>
        <taxon>Pseudomonas</taxon>
    </lineage>
</organism>
<comment type="function">
    <text evidence="1">Conversion of NADPH, generated by peripheral catabolic pathways, to NADH, which can enter the respiratory chain for energy generation.</text>
</comment>
<comment type="catalytic activity">
    <reaction evidence="1">
        <text>NAD(+) + NADPH = NADH + NADP(+)</text>
        <dbReference type="Rhea" id="RHEA:11692"/>
        <dbReference type="ChEBI" id="CHEBI:57540"/>
        <dbReference type="ChEBI" id="CHEBI:57783"/>
        <dbReference type="ChEBI" id="CHEBI:57945"/>
        <dbReference type="ChEBI" id="CHEBI:58349"/>
        <dbReference type="EC" id="1.6.1.1"/>
    </reaction>
</comment>
<comment type="cofactor">
    <cofactor evidence="1">
        <name>FAD</name>
        <dbReference type="ChEBI" id="CHEBI:57692"/>
    </cofactor>
    <text evidence="1">Binds 1 FAD per subunit.</text>
</comment>
<comment type="subcellular location">
    <subcellularLocation>
        <location evidence="1">Cytoplasm</location>
    </subcellularLocation>
</comment>
<comment type="similarity">
    <text evidence="1">Belongs to the class-I pyridine nucleotide-disulfide oxidoreductase family.</text>
</comment>
<name>STHA_PSEAB</name>
<feature type="chain" id="PRO_1000012562" description="Soluble pyridine nucleotide transhydrogenase">
    <location>
        <begin position="1"/>
        <end position="464"/>
    </location>
</feature>
<feature type="binding site" evidence="1">
    <location>
        <begin position="35"/>
        <end position="44"/>
    </location>
    <ligand>
        <name>FAD</name>
        <dbReference type="ChEBI" id="CHEBI:57692"/>
    </ligand>
</feature>
<gene>
    <name evidence="1" type="primary">sthA</name>
    <name type="ordered locus">PA14_25390</name>
</gene>